<name>CE57L_XENLA</name>
<protein>
    <recommendedName>
        <fullName>Centrosomal protein cep57l1</fullName>
    </recommendedName>
    <alternativeName>
        <fullName>Centrosomal protein 57kDa-like protein 1</fullName>
    </alternativeName>
    <alternativeName>
        <fullName>Centrosomal protein of 57 kDa</fullName>
        <shortName>Cep57</shortName>
        <shortName>XCep57</shortName>
    </alternativeName>
    <alternativeName>
        <fullName>Cep57-related protein</fullName>
        <shortName>Cep57R</shortName>
    </alternativeName>
</protein>
<gene>
    <name type="primary">cep57l1</name>
    <name type="synonym">cep57</name>
    <name type="synonym">cep57r</name>
</gene>
<proteinExistence type="evidence at protein level"/>
<feature type="chain" id="PRO_0000381818" description="Centrosomal protein cep57l1">
    <location>
        <begin position="1"/>
        <end position="488"/>
    </location>
</feature>
<feature type="region of interest" description="Disordered" evidence="2">
    <location>
        <begin position="232"/>
        <end position="272"/>
    </location>
</feature>
<feature type="region of interest" description="Disordered" evidence="2">
    <location>
        <begin position="311"/>
        <end position="342"/>
    </location>
</feature>
<feature type="region of interest" description="Disordered" evidence="2">
    <location>
        <begin position="416"/>
        <end position="464"/>
    </location>
</feature>
<feature type="coiled-coil region" evidence="1">
    <location>
        <begin position="71"/>
        <end position="226"/>
    </location>
</feature>
<feature type="coiled-coil region" evidence="1">
    <location>
        <begin position="377"/>
        <end position="403"/>
    </location>
</feature>
<feature type="compositionally biased region" description="Basic residues" evidence="2">
    <location>
        <begin position="241"/>
        <end position="250"/>
    </location>
</feature>
<feature type="compositionally biased region" description="Basic and acidic residues" evidence="2">
    <location>
        <begin position="259"/>
        <end position="270"/>
    </location>
</feature>
<feature type="compositionally biased region" description="Basic and acidic residues" evidence="2">
    <location>
        <begin position="314"/>
        <end position="325"/>
    </location>
</feature>
<feature type="compositionally biased region" description="Polar residues" evidence="2">
    <location>
        <begin position="452"/>
        <end position="464"/>
    </location>
</feature>
<sequence>MESVSKESYLPSFHQFPLCASLSEFESASSKETQSSALKNISPHPYDILQAPNSRALISALKTLQNKICRLESEKTHARDRLTNLSRAAGEHKKVLESEKRSAEWAAQEATSQKNDVAMQLNNAEQRCSLLEKQLDYMRKMMENADIQNNPIHQIPAQKEQKDMLEMQSKLQKLEVLENECLRLKATHKSSENKIQFLEEKLSVEEQERKALQDKAAQVQTSLEVNRILLSSASSQNSTQRKVKKKKQSKQKNAISKEPSSKEPLSKEPPSKCFFPKAGELPFVAGKSTTSSHSLSANVQNMLHMMKHQSPRVSQKDPKTVEHKPSILPGGSRSIPTRLMSSSTGDTLSDILLALQDELGQMSFEHQELLKHIDETKNTDMREDLERELDYLVKQMEIKSDQIIKLKRHQLNVAKLKKTAKKQPRPPSTTKPAEDEQNIGATDPCTPRNKGNLANGTGTPNSKASLELLKSVRKIQMTLKKDDIMWEK</sequence>
<accession>Q5FWP9</accession>
<keyword id="KW-0137">Centromere</keyword>
<keyword id="KW-0158">Chromosome</keyword>
<keyword id="KW-0175">Coiled coil</keyword>
<keyword id="KW-0963">Cytoplasm</keyword>
<keyword id="KW-0206">Cytoskeleton</keyword>
<keyword id="KW-0995">Kinetochore</keyword>
<keyword id="KW-0493">Microtubule</keyword>
<keyword id="KW-1185">Reference proteome</keyword>
<reference key="1">
    <citation type="submission" date="2005-01" db="EMBL/GenBank/DDBJ databases">
        <authorList>
            <consortium name="NIH - Xenopus Gene Collection (XGC) project"/>
        </authorList>
    </citation>
    <scope>NUCLEOTIDE SEQUENCE [LARGE SCALE MRNA]</scope>
    <source>
        <tissue>Egg</tissue>
    </source>
</reference>
<reference key="2">
    <citation type="journal article" date="2007" name="Cell">
        <title>Xenopus Cep57 is a novel kinetochore component involved in microtubule attachment.</title>
        <authorList>
            <person name="Emanuele M.J."/>
            <person name="Stukenberg P.T."/>
        </authorList>
    </citation>
    <scope>FUNCTION</scope>
    <scope>SUBCELLULAR LOCATION</scope>
    <scope>INTERACTION WITH CLIP1; GAMMA-TUBULIN; MIS12; NDC80 AND ZWINT</scope>
</reference>
<comment type="function">
    <text evidence="3">Required for spindle microtubule attachment to both kinetochores and centrosomes. Also functions to tether minus-ends of spindle microtubules to centrosomes. May act by forming ring-like structures around microtubules, or by serving as a cross-linker or scaffold at the attachment site.</text>
</comment>
<comment type="subunit">
    <text evidence="3">Interacts with clip1, mis12, ndc80 and zwint. Interacts with gamma-tubulin.</text>
</comment>
<comment type="subcellular location">
    <subcellularLocation>
        <location evidence="3">Cytoplasm</location>
        <location evidence="3">Cytoskeleton</location>
        <location evidence="3">Microtubule organizing center</location>
        <location evidence="3">Centrosome</location>
    </subcellularLocation>
    <subcellularLocation>
        <location evidence="3">Chromosome</location>
        <location evidence="3">Centromere</location>
        <location evidence="3">Kinetochore</location>
    </subcellularLocation>
    <subcellularLocation>
        <location evidence="3">Cytoplasm</location>
        <location evidence="3">Cytoskeleton</location>
        <location evidence="3">Spindle</location>
    </subcellularLocation>
    <text>Localizes to spindle microtubules.</text>
</comment>
<comment type="similarity">
    <text evidence="4">Belongs to the translokin family.</text>
</comment>
<dbReference type="EMBL" id="BC089255">
    <property type="protein sequence ID" value="AAH89255.1"/>
    <property type="molecule type" value="mRNA"/>
</dbReference>
<dbReference type="RefSeq" id="NP_001089236.1">
    <property type="nucleotide sequence ID" value="NM_001095767.1"/>
</dbReference>
<dbReference type="SMR" id="Q5FWP9"/>
<dbReference type="DNASU" id="734283"/>
<dbReference type="GeneID" id="734283"/>
<dbReference type="KEGG" id="xla:734283"/>
<dbReference type="AGR" id="Xenbase:XB-GENE-5897421"/>
<dbReference type="CTD" id="734283"/>
<dbReference type="Xenbase" id="XB-GENE-5897421">
    <property type="gene designation" value="cep57l1.L"/>
</dbReference>
<dbReference type="OrthoDB" id="76453at2759"/>
<dbReference type="Proteomes" id="UP000186698">
    <property type="component" value="Chromosome 5L"/>
</dbReference>
<dbReference type="Bgee" id="734283">
    <property type="expression patterns" value="Expressed in egg cell and 18 other cell types or tissues"/>
</dbReference>
<dbReference type="GO" id="GO:0005813">
    <property type="term" value="C:centrosome"/>
    <property type="evidence" value="ECO:0000314"/>
    <property type="project" value="UniProtKB"/>
</dbReference>
<dbReference type="GO" id="GO:0005737">
    <property type="term" value="C:cytoplasm"/>
    <property type="evidence" value="ECO:0007669"/>
    <property type="project" value="UniProtKB-KW"/>
</dbReference>
<dbReference type="GO" id="GO:0000776">
    <property type="term" value="C:kinetochore"/>
    <property type="evidence" value="ECO:0000314"/>
    <property type="project" value="UniProtKB"/>
</dbReference>
<dbReference type="GO" id="GO:0005876">
    <property type="term" value="C:spindle microtubule"/>
    <property type="evidence" value="ECO:0000314"/>
    <property type="project" value="UniProtKB"/>
</dbReference>
<dbReference type="GO" id="GO:0043015">
    <property type="term" value="F:gamma-tubulin binding"/>
    <property type="evidence" value="ECO:0000314"/>
    <property type="project" value="UniProtKB"/>
</dbReference>
<dbReference type="GO" id="GO:0042802">
    <property type="term" value="F:identical protein binding"/>
    <property type="evidence" value="ECO:0007669"/>
    <property type="project" value="InterPro"/>
</dbReference>
<dbReference type="GO" id="GO:0008017">
    <property type="term" value="F:microtubule binding"/>
    <property type="evidence" value="ECO:0000318"/>
    <property type="project" value="GO_Central"/>
</dbReference>
<dbReference type="GO" id="GO:0008608">
    <property type="term" value="P:attachment of spindle microtubules to kinetochore"/>
    <property type="evidence" value="ECO:0000315"/>
    <property type="project" value="UniProtKB"/>
</dbReference>
<dbReference type="FunFam" id="1.20.58.90:FF:000003">
    <property type="entry name" value="Centrosomal protein of 57 kDa"/>
    <property type="match status" value="1"/>
</dbReference>
<dbReference type="Gene3D" id="1.20.58.90">
    <property type="match status" value="1"/>
</dbReference>
<dbReference type="InterPro" id="IPR051756">
    <property type="entry name" value="Centrosomal_MT-associated"/>
</dbReference>
<dbReference type="InterPro" id="IPR025913">
    <property type="entry name" value="Cep57_CLD"/>
</dbReference>
<dbReference type="InterPro" id="IPR024957">
    <property type="entry name" value="Cep57_MT-bd_dom"/>
</dbReference>
<dbReference type="PANTHER" id="PTHR19336:SF10">
    <property type="entry name" value="CENTROSOMAL PROTEIN CEP57L1"/>
    <property type="match status" value="1"/>
</dbReference>
<dbReference type="PANTHER" id="PTHR19336">
    <property type="entry name" value="UNCHARACTERIZED DUF1167"/>
    <property type="match status" value="1"/>
</dbReference>
<dbReference type="Pfam" id="PF14073">
    <property type="entry name" value="Cep57_CLD"/>
    <property type="match status" value="1"/>
</dbReference>
<dbReference type="Pfam" id="PF06657">
    <property type="entry name" value="Cep57_MT_bd"/>
    <property type="match status" value="1"/>
</dbReference>
<evidence type="ECO:0000255" key="1"/>
<evidence type="ECO:0000256" key="2">
    <source>
        <dbReference type="SAM" id="MobiDB-lite"/>
    </source>
</evidence>
<evidence type="ECO:0000269" key="3">
    <source>
    </source>
</evidence>
<evidence type="ECO:0000305" key="4"/>
<organism>
    <name type="scientific">Xenopus laevis</name>
    <name type="common">African clawed frog</name>
    <dbReference type="NCBI Taxonomy" id="8355"/>
    <lineage>
        <taxon>Eukaryota</taxon>
        <taxon>Metazoa</taxon>
        <taxon>Chordata</taxon>
        <taxon>Craniata</taxon>
        <taxon>Vertebrata</taxon>
        <taxon>Euteleostomi</taxon>
        <taxon>Amphibia</taxon>
        <taxon>Batrachia</taxon>
        <taxon>Anura</taxon>
        <taxon>Pipoidea</taxon>
        <taxon>Pipidae</taxon>
        <taxon>Xenopodinae</taxon>
        <taxon>Xenopus</taxon>
        <taxon>Xenopus</taxon>
    </lineage>
</organism>